<dbReference type="EC" id="6.2.1.26" evidence="1"/>
<dbReference type="EMBL" id="CP000227">
    <property type="protein sequence ID" value="ACM15095.1"/>
    <property type="molecule type" value="Genomic_DNA"/>
</dbReference>
<dbReference type="SMR" id="B9J2F2"/>
<dbReference type="KEGG" id="bcq:BCQ_4669"/>
<dbReference type="HOGENOM" id="CLU_000022_59_0_9"/>
<dbReference type="UniPathway" id="UPA00079"/>
<dbReference type="UniPathway" id="UPA01057">
    <property type="reaction ID" value="UER00166"/>
</dbReference>
<dbReference type="Proteomes" id="UP000000441">
    <property type="component" value="Chromosome"/>
</dbReference>
<dbReference type="GO" id="GO:0005524">
    <property type="term" value="F:ATP binding"/>
    <property type="evidence" value="ECO:0007669"/>
    <property type="project" value="UniProtKB-KW"/>
</dbReference>
<dbReference type="GO" id="GO:0008756">
    <property type="term" value="F:o-succinylbenzoate-CoA ligase activity"/>
    <property type="evidence" value="ECO:0007669"/>
    <property type="project" value="UniProtKB-UniRule"/>
</dbReference>
<dbReference type="GO" id="GO:0009234">
    <property type="term" value="P:menaquinone biosynthetic process"/>
    <property type="evidence" value="ECO:0007669"/>
    <property type="project" value="UniProtKB-UniRule"/>
</dbReference>
<dbReference type="CDD" id="cd05912">
    <property type="entry name" value="OSB_CoA_lg"/>
    <property type="match status" value="1"/>
</dbReference>
<dbReference type="FunFam" id="3.30.300.30:FF:000008">
    <property type="entry name" value="2,3-dihydroxybenzoate-AMP ligase"/>
    <property type="match status" value="1"/>
</dbReference>
<dbReference type="Gene3D" id="3.30.300.30">
    <property type="match status" value="1"/>
</dbReference>
<dbReference type="Gene3D" id="3.40.50.12780">
    <property type="entry name" value="N-terminal domain of ligase-like"/>
    <property type="match status" value="1"/>
</dbReference>
<dbReference type="HAMAP" id="MF_00731">
    <property type="entry name" value="MenE"/>
    <property type="match status" value="1"/>
</dbReference>
<dbReference type="InterPro" id="IPR025110">
    <property type="entry name" value="AMP-bd_C"/>
</dbReference>
<dbReference type="InterPro" id="IPR045851">
    <property type="entry name" value="AMP-bd_C_sf"/>
</dbReference>
<dbReference type="InterPro" id="IPR020845">
    <property type="entry name" value="AMP-binding_CS"/>
</dbReference>
<dbReference type="InterPro" id="IPR000873">
    <property type="entry name" value="AMP-dep_synth/lig_dom"/>
</dbReference>
<dbReference type="InterPro" id="IPR042099">
    <property type="entry name" value="ANL_N_sf"/>
</dbReference>
<dbReference type="InterPro" id="IPR010192">
    <property type="entry name" value="MenE"/>
</dbReference>
<dbReference type="NCBIfam" id="TIGR01923">
    <property type="entry name" value="menE"/>
    <property type="match status" value="1"/>
</dbReference>
<dbReference type="NCBIfam" id="NF002966">
    <property type="entry name" value="PRK03640.1"/>
    <property type="match status" value="1"/>
</dbReference>
<dbReference type="PANTHER" id="PTHR24096:SF149">
    <property type="entry name" value="AMP-BINDING DOMAIN-CONTAINING PROTEIN-RELATED"/>
    <property type="match status" value="1"/>
</dbReference>
<dbReference type="PANTHER" id="PTHR24096">
    <property type="entry name" value="LONG-CHAIN-FATTY-ACID--COA LIGASE"/>
    <property type="match status" value="1"/>
</dbReference>
<dbReference type="Pfam" id="PF00501">
    <property type="entry name" value="AMP-binding"/>
    <property type="match status" value="1"/>
</dbReference>
<dbReference type="Pfam" id="PF13193">
    <property type="entry name" value="AMP-binding_C"/>
    <property type="match status" value="1"/>
</dbReference>
<dbReference type="SUPFAM" id="SSF56801">
    <property type="entry name" value="Acetyl-CoA synthetase-like"/>
    <property type="match status" value="1"/>
</dbReference>
<dbReference type="PROSITE" id="PS00455">
    <property type="entry name" value="AMP_BINDING"/>
    <property type="match status" value="1"/>
</dbReference>
<name>MENE_BACCQ</name>
<keyword id="KW-0067">ATP-binding</keyword>
<keyword id="KW-0436">Ligase</keyword>
<keyword id="KW-0474">Menaquinone biosynthesis</keyword>
<keyword id="KW-0547">Nucleotide-binding</keyword>
<sequence length="481" mass="53496">METMPNWLMQRAFLTPDRTAIEIEEEKVTFMQLHEKVVSVCGNLTHVGVKRGQKVAVLMKNGMEMITVIHALSYVGAVAVLLNTRLSREELLWQMDDAEVICLVTDQDFEAKDIPVYSFAEVMNGPKEEAFIQEEFSLEEAMTIIYTSGTTGKPKGVILTYGNHWASAVGSSLNLGLRDDDCWLACMPMFHVGGLSLLMKNIMYGMRILLVPKYDADFIHKALQTRGVTIISVVSKMLTDLLERLGAETYPSSLRCMLLGGGPAPKPLLETCVEKGIPVYQTYGMTETSSQICTLSADYMLTKVGSAGKPLFQCQLRIEKDGVVVPAFTEGEIVVKGPNVTGGYFNREDATRETIQNGWLHTGDLGYLDEEGFLYVLDRRSDLIISGGENIYPAQIEEVLLSHPAVAEAGVVGMTDDKWGQVPAAFVVKSGEVTEEEILHFCEEKLAKYKVPKKACFLEELPRNASKKLLRRELRQLVEEM</sequence>
<proteinExistence type="inferred from homology"/>
<feature type="chain" id="PRO_1000148088" description="2-succinylbenzoate--CoA ligase">
    <location>
        <begin position="1"/>
        <end position="481"/>
    </location>
</feature>
<comment type="function">
    <text evidence="1">Converts 2-succinylbenzoate (OSB) to 2-succinylbenzoyl-CoA (OSB-CoA).</text>
</comment>
<comment type="catalytic activity">
    <reaction evidence="1">
        <text>2-succinylbenzoate + ATP + CoA = 2-succinylbenzoyl-CoA + AMP + diphosphate</text>
        <dbReference type="Rhea" id="RHEA:17009"/>
        <dbReference type="ChEBI" id="CHEBI:18325"/>
        <dbReference type="ChEBI" id="CHEBI:30616"/>
        <dbReference type="ChEBI" id="CHEBI:33019"/>
        <dbReference type="ChEBI" id="CHEBI:57287"/>
        <dbReference type="ChEBI" id="CHEBI:57364"/>
        <dbReference type="ChEBI" id="CHEBI:456215"/>
        <dbReference type="EC" id="6.2.1.26"/>
    </reaction>
</comment>
<comment type="pathway">
    <text evidence="1">Quinol/quinone metabolism; 1,4-dihydroxy-2-naphthoate biosynthesis; 1,4-dihydroxy-2-naphthoate from chorismate: step 5/7.</text>
</comment>
<comment type="pathway">
    <text evidence="1">Quinol/quinone metabolism; menaquinone biosynthesis.</text>
</comment>
<comment type="similarity">
    <text evidence="1">Belongs to the ATP-dependent AMP-binding enzyme family. MenE subfamily.</text>
</comment>
<evidence type="ECO:0000255" key="1">
    <source>
        <dbReference type="HAMAP-Rule" id="MF_00731"/>
    </source>
</evidence>
<protein>
    <recommendedName>
        <fullName evidence="1">2-succinylbenzoate--CoA ligase</fullName>
        <ecNumber evidence="1">6.2.1.26</ecNumber>
    </recommendedName>
    <alternativeName>
        <fullName evidence="1">o-succinylbenzoyl-CoA synthetase</fullName>
        <shortName evidence="1">OSB-CoA synthetase</shortName>
    </alternativeName>
</protein>
<accession>B9J2F2</accession>
<gene>
    <name evidence="1" type="primary">menE</name>
    <name type="ordered locus">BCQ_4669</name>
</gene>
<reference key="1">
    <citation type="journal article" date="2009" name="J. Bacteriol.">
        <title>Complete genome sequence of the extremophilic Bacillus cereus strain Q1 with industrial applications.</title>
        <authorList>
            <person name="Xiong Z."/>
            <person name="Jiang Y."/>
            <person name="Qi D."/>
            <person name="Lu H."/>
            <person name="Yang F."/>
            <person name="Yang J."/>
            <person name="Chen L."/>
            <person name="Sun L."/>
            <person name="Xu X."/>
            <person name="Xue Y."/>
            <person name="Zhu Y."/>
            <person name="Jin Q."/>
        </authorList>
    </citation>
    <scope>NUCLEOTIDE SEQUENCE [LARGE SCALE GENOMIC DNA]</scope>
    <source>
        <strain>Q1</strain>
    </source>
</reference>
<organism>
    <name type="scientific">Bacillus cereus (strain Q1)</name>
    <dbReference type="NCBI Taxonomy" id="361100"/>
    <lineage>
        <taxon>Bacteria</taxon>
        <taxon>Bacillati</taxon>
        <taxon>Bacillota</taxon>
        <taxon>Bacilli</taxon>
        <taxon>Bacillales</taxon>
        <taxon>Bacillaceae</taxon>
        <taxon>Bacillus</taxon>
        <taxon>Bacillus cereus group</taxon>
    </lineage>
</organism>